<comment type="function">
    <text evidence="1">Probably catalyzes the deacetylation of acetylated carbohydrates an important step in the degradation of oligosaccharides.</text>
</comment>
<comment type="cofactor">
    <cofactor evidence="1">
        <name>Mg(2+)</name>
        <dbReference type="ChEBI" id="CHEBI:18420"/>
    </cofactor>
</comment>
<comment type="similarity">
    <text evidence="1">Belongs to the YdjC deacetylase family.</text>
</comment>
<keyword id="KW-0119">Carbohydrate metabolism</keyword>
<keyword id="KW-0378">Hydrolase</keyword>
<keyword id="KW-0460">Magnesium</keyword>
<keyword id="KW-0479">Metal-binding</keyword>
<keyword id="KW-1185">Reference proteome</keyword>
<proteinExistence type="inferred from homology"/>
<feature type="chain" id="PRO_0000051586" description="Carbohydrate deacetylase">
    <location>
        <begin position="1"/>
        <end position="235"/>
    </location>
</feature>
<feature type="binding site" evidence="1">
    <location>
        <position position="61"/>
    </location>
    <ligand>
        <name>Mg(2+)</name>
        <dbReference type="ChEBI" id="CHEBI:18420"/>
    </ligand>
</feature>
<feature type="binding site" evidence="1">
    <location>
        <position position="124"/>
    </location>
    <ligand>
        <name>Mg(2+)</name>
        <dbReference type="ChEBI" id="CHEBI:18420"/>
    </ligand>
</feature>
<reference key="1">
    <citation type="submission" date="1998-07" db="EMBL/GenBank/DDBJ databases">
        <title>Analysis of a possible efflux gene in Bacillus cereus.</title>
        <authorList>
            <person name="Hegna I.K."/>
            <person name="Borge S."/>
            <person name="Kolstoe A.-B."/>
        </authorList>
    </citation>
    <scope>NUCLEOTIDE SEQUENCE [GENOMIC DNA]</scope>
</reference>
<reference key="2">
    <citation type="journal article" date="2003" name="Nature">
        <title>Genome sequence of Bacillus cereus and comparative analysis with Bacillus anthracis.</title>
        <authorList>
            <person name="Ivanova N."/>
            <person name="Sorokin A."/>
            <person name="Anderson I."/>
            <person name="Galleron N."/>
            <person name="Candelon B."/>
            <person name="Kapatral V."/>
            <person name="Bhattacharyya A."/>
            <person name="Reznik G."/>
            <person name="Mikhailova N."/>
            <person name="Lapidus A."/>
            <person name="Chu L."/>
            <person name="Mazur M."/>
            <person name="Goltsman E."/>
            <person name="Larsen N."/>
            <person name="D'Souza M."/>
            <person name="Walunas T."/>
            <person name="Grechkin Y."/>
            <person name="Pusch G."/>
            <person name="Haselkorn R."/>
            <person name="Fonstein M."/>
            <person name="Ehrlich S.D."/>
            <person name="Overbeek R."/>
            <person name="Kyrpides N.C."/>
        </authorList>
    </citation>
    <scope>NUCLEOTIDE SEQUENCE [LARGE SCALE GENOMIC DNA]</scope>
    <source>
        <strain>ATCC 14579 / DSM 31 / CCUG 7414 / JCM 2152 / NBRC 15305 / NCIMB 9373 / NCTC 2599 / NRRL B-3711</strain>
    </source>
</reference>
<organism>
    <name type="scientific">Bacillus cereus (strain ATCC 14579 / DSM 31 / CCUG 7414 / JCM 2152 / NBRC 15305 / NCIMB 9373 / NCTC 2599 / NRRL B-3711)</name>
    <dbReference type="NCBI Taxonomy" id="226900"/>
    <lineage>
        <taxon>Bacteria</taxon>
        <taxon>Bacillati</taxon>
        <taxon>Bacillota</taxon>
        <taxon>Bacilli</taxon>
        <taxon>Bacillales</taxon>
        <taxon>Bacillaceae</taxon>
        <taxon>Bacillus</taxon>
        <taxon>Bacillus cereus group</taxon>
    </lineage>
</organism>
<accession>Q9L4R7</accession>
<gene>
    <name type="ordered locus">BC_5208</name>
</gene>
<dbReference type="EC" id="3.5.1.-" evidence="1"/>
<dbReference type="EMBL" id="AJ007952">
    <property type="protein sequence ID" value="CAB66320.1"/>
    <property type="molecule type" value="Genomic_DNA"/>
</dbReference>
<dbReference type="EMBL" id="AE016877">
    <property type="protein sequence ID" value="AAP12073.1"/>
    <property type="molecule type" value="Genomic_DNA"/>
</dbReference>
<dbReference type="RefSeq" id="NP_834872.1">
    <property type="nucleotide sequence ID" value="NC_004722.1"/>
</dbReference>
<dbReference type="SMR" id="Q9L4R7"/>
<dbReference type="STRING" id="226900.BC_5208"/>
<dbReference type="KEGG" id="bce:BC5208"/>
<dbReference type="PATRIC" id="fig|226900.8.peg.5371"/>
<dbReference type="HOGENOM" id="CLU_064244_4_0_9"/>
<dbReference type="Proteomes" id="UP000001417">
    <property type="component" value="Chromosome"/>
</dbReference>
<dbReference type="GO" id="GO:0019213">
    <property type="term" value="F:deacetylase activity"/>
    <property type="evidence" value="ECO:0000318"/>
    <property type="project" value="GO_Central"/>
</dbReference>
<dbReference type="GO" id="GO:0016811">
    <property type="term" value="F:hydrolase activity, acting on carbon-nitrogen (but not peptide) bonds, in linear amides"/>
    <property type="evidence" value="ECO:0007669"/>
    <property type="project" value="UniProtKB-UniRule"/>
</dbReference>
<dbReference type="GO" id="GO:0046872">
    <property type="term" value="F:metal ion binding"/>
    <property type="evidence" value="ECO:0007669"/>
    <property type="project" value="UniProtKB-KW"/>
</dbReference>
<dbReference type="GO" id="GO:0000272">
    <property type="term" value="P:polysaccharide catabolic process"/>
    <property type="evidence" value="ECO:0007669"/>
    <property type="project" value="InterPro"/>
</dbReference>
<dbReference type="CDD" id="cd10803">
    <property type="entry name" value="YdjC_EF3048_like"/>
    <property type="match status" value="1"/>
</dbReference>
<dbReference type="FunFam" id="3.20.20.370:FF:000011">
    <property type="entry name" value="Carbohydrate deacetylase"/>
    <property type="match status" value="1"/>
</dbReference>
<dbReference type="Gene3D" id="3.20.20.370">
    <property type="entry name" value="Glycoside hydrolase/deacetylase"/>
    <property type="match status" value="1"/>
</dbReference>
<dbReference type="HAMAP" id="MF_01246">
    <property type="entry name" value="COD"/>
    <property type="match status" value="1"/>
</dbReference>
<dbReference type="InterPro" id="IPR022948">
    <property type="entry name" value="COD_ChbG_bac"/>
</dbReference>
<dbReference type="InterPro" id="IPR011330">
    <property type="entry name" value="Glyco_hydro/deAcase_b/a-brl"/>
</dbReference>
<dbReference type="InterPro" id="IPR006879">
    <property type="entry name" value="YdjC-like"/>
</dbReference>
<dbReference type="NCBIfam" id="NF002559">
    <property type="entry name" value="PRK02134.1"/>
    <property type="match status" value="1"/>
</dbReference>
<dbReference type="PANTHER" id="PTHR31609:SF1">
    <property type="entry name" value="CARBOHYDRATE DEACETYLASE"/>
    <property type="match status" value="1"/>
</dbReference>
<dbReference type="PANTHER" id="PTHR31609">
    <property type="entry name" value="YDJC DEACETYLASE FAMILY MEMBER"/>
    <property type="match status" value="1"/>
</dbReference>
<dbReference type="Pfam" id="PF04794">
    <property type="entry name" value="YdjC"/>
    <property type="match status" value="1"/>
</dbReference>
<dbReference type="SUPFAM" id="SSF88713">
    <property type="entry name" value="Glycoside hydrolase/deacetylase"/>
    <property type="match status" value="1"/>
</dbReference>
<protein>
    <recommendedName>
        <fullName evidence="1">Carbohydrate deacetylase</fullName>
        <ecNumber evidence="1">3.5.1.-</ecNumber>
    </recommendedName>
</protein>
<name>YDJC_BACCR</name>
<sequence>MMIKLIVNADDFGLTEGTNYGIIDGHINGLVNSTTMMMNMPGTEHAVRLAKEYNLLGVGVHLVLTAGEPLLKDVPSLVGENGSFHKQSVVREGNINPEEVEREWTAQIEKFLSYGLTPTHLDSHHHVHGLPILHDVLERLAAKYNVPIRRCEEDRAVHPFSDVFYSDFYADGVTEDYFVKLKERVQGEQTVEIMVHPAYIDPELVKRSSYVMDRVKELRILTESELPEGIELVKF</sequence>
<evidence type="ECO:0000255" key="1">
    <source>
        <dbReference type="HAMAP-Rule" id="MF_01246"/>
    </source>
</evidence>